<feature type="chain" id="PRO_0000300136" description="Cytochrome b6-f complex subunit 6">
    <location>
        <begin position="1"/>
        <end position="31"/>
    </location>
</feature>
<feature type="transmembrane region" description="Helical" evidence="1">
    <location>
        <begin position="4"/>
        <end position="26"/>
    </location>
</feature>
<keyword id="KW-0150">Chloroplast</keyword>
<keyword id="KW-0249">Electron transport</keyword>
<keyword id="KW-0472">Membrane</keyword>
<keyword id="KW-0602">Photosynthesis</keyword>
<keyword id="KW-0934">Plastid</keyword>
<keyword id="KW-0793">Thylakoid</keyword>
<keyword id="KW-0812">Transmembrane</keyword>
<keyword id="KW-1133">Transmembrane helix</keyword>
<keyword id="KW-0813">Transport</keyword>
<comment type="function">
    <text evidence="1">Component of the cytochrome b6-f complex, which mediates electron transfer between photosystem II (PSII) and photosystem I (PSI), cyclic electron flow around PSI, and state transitions. PetL is important for photoautotrophic growth as well as for electron transfer efficiency and stability of the cytochrome b6-f complex.</text>
</comment>
<comment type="subunit">
    <text evidence="1">The 4 large subunits of the cytochrome b6-f complex are cytochrome b6, subunit IV (17 kDa polypeptide, PetD), cytochrome f and the Rieske protein, while the 4 small subunits are PetG, PetL, PetM and PetN. The complex functions as a dimer.</text>
</comment>
<comment type="subcellular location">
    <subcellularLocation>
        <location evidence="1">Plastid</location>
        <location evidence="1">Chloroplast thylakoid membrane</location>
        <topology evidence="1">Single-pass membrane protein</topology>
    </subcellularLocation>
</comment>
<comment type="similarity">
    <text evidence="1">Belongs to the PetL family.</text>
</comment>
<name>PETL_BUXMI</name>
<reference key="1">
    <citation type="journal article" date="2007" name="Mol. Phylogenet. Evol.">
        <title>Phylogenetic and evolutionary implications of complete chloroplast genome sequences of four early-diverging angiosperms: Buxus (Buxaceae), Chloranthus (Chloranthaceae), Dioscorea (Dioscoreaceae), and Illicium (Schisandraceae).</title>
        <authorList>
            <person name="Hansen D.R."/>
            <person name="Dastidar S.G."/>
            <person name="Cai Z."/>
            <person name="Penaflor C."/>
            <person name="Kuehl J.V."/>
            <person name="Boore J.L."/>
            <person name="Jansen R.K."/>
        </authorList>
    </citation>
    <scope>NUCLEOTIDE SEQUENCE [LARGE SCALE GENOMIC DNA]</scope>
</reference>
<dbReference type="EMBL" id="EF380351">
    <property type="protein sequence ID" value="ABQ45267.1"/>
    <property type="molecule type" value="Genomic_DNA"/>
</dbReference>
<dbReference type="RefSeq" id="YP_001294202.1">
    <property type="nucleotide sequence ID" value="NC_009599.1"/>
</dbReference>
<dbReference type="SMR" id="A6MM54"/>
<dbReference type="GeneID" id="5236858"/>
<dbReference type="GO" id="GO:0009535">
    <property type="term" value="C:chloroplast thylakoid membrane"/>
    <property type="evidence" value="ECO:0007669"/>
    <property type="project" value="UniProtKB-SubCell"/>
</dbReference>
<dbReference type="GO" id="GO:0009512">
    <property type="term" value="C:cytochrome b6f complex"/>
    <property type="evidence" value="ECO:0007669"/>
    <property type="project" value="InterPro"/>
</dbReference>
<dbReference type="GO" id="GO:0045158">
    <property type="term" value="F:electron transporter, transferring electrons within cytochrome b6/f complex of photosystem II activity"/>
    <property type="evidence" value="ECO:0007669"/>
    <property type="project" value="UniProtKB-UniRule"/>
</dbReference>
<dbReference type="GO" id="GO:0015979">
    <property type="term" value="P:photosynthesis"/>
    <property type="evidence" value="ECO:0007669"/>
    <property type="project" value="UniProtKB-KW"/>
</dbReference>
<dbReference type="HAMAP" id="MF_00433">
    <property type="entry name" value="Cytb6_f_PetL"/>
    <property type="match status" value="1"/>
</dbReference>
<dbReference type="InterPro" id="IPR007802">
    <property type="entry name" value="Cyt_b6/f_cplx_su6"/>
</dbReference>
<dbReference type="PANTHER" id="PTHR37266">
    <property type="entry name" value="CYTOCHROME B6-F COMPLEX SUBUNIT 6"/>
    <property type="match status" value="1"/>
</dbReference>
<dbReference type="PANTHER" id="PTHR37266:SF1">
    <property type="entry name" value="CYTOCHROME B6-F COMPLEX SUBUNIT 6"/>
    <property type="match status" value="1"/>
</dbReference>
<dbReference type="Pfam" id="PF05115">
    <property type="entry name" value="PetL"/>
    <property type="match status" value="1"/>
</dbReference>
<geneLocation type="chloroplast"/>
<proteinExistence type="inferred from homology"/>
<accession>A6MM54</accession>
<gene>
    <name evidence="1" type="primary">petL</name>
</gene>
<organism>
    <name type="scientific">Buxus microphylla</name>
    <name type="common">Littleleaf boxwood</name>
    <name type="synonym">Japanese boxwood</name>
    <dbReference type="NCBI Taxonomy" id="153571"/>
    <lineage>
        <taxon>Eukaryota</taxon>
        <taxon>Viridiplantae</taxon>
        <taxon>Streptophyta</taxon>
        <taxon>Embryophyta</taxon>
        <taxon>Tracheophyta</taxon>
        <taxon>Spermatophyta</taxon>
        <taxon>Magnoliopsida</taxon>
        <taxon>Buxales</taxon>
        <taxon>Buxaceae</taxon>
        <taxon>Buxus</taxon>
    </lineage>
</organism>
<protein>
    <recommendedName>
        <fullName evidence="1">Cytochrome b6-f complex subunit 6</fullName>
    </recommendedName>
    <alternativeName>
        <fullName evidence="1">Cytochrome b6-f complex subunit PetL</fullName>
    </alternativeName>
    <alternativeName>
        <fullName evidence="1">Cytochrome b6-f complex subunit VI</fullName>
    </alternativeName>
</protein>
<evidence type="ECO:0000255" key="1">
    <source>
        <dbReference type="HAMAP-Rule" id="MF_00433"/>
    </source>
</evidence>
<sequence>MPTITSYFGFLLAASTITPALFIGLSKIRLI</sequence>